<evidence type="ECO:0000250" key="1">
    <source>
        <dbReference type="UniProtKB" id="P01530"/>
    </source>
</evidence>
<evidence type="ECO:0000269" key="2">
    <source>
    </source>
</evidence>
<evidence type="ECO:0000269" key="3">
    <source>
    </source>
</evidence>
<evidence type="ECO:0000269" key="4">
    <source>
    </source>
</evidence>
<evidence type="ECO:0000269" key="5">
    <source>
    </source>
</evidence>
<evidence type="ECO:0000269" key="6">
    <source>
    </source>
</evidence>
<evidence type="ECO:0000269" key="7">
    <source>
    </source>
</evidence>
<evidence type="ECO:0000269" key="8">
    <source>
    </source>
</evidence>
<evidence type="ECO:0000269" key="9">
    <source>
    </source>
</evidence>
<evidence type="ECO:0000269" key="10">
    <source>
    </source>
</evidence>
<evidence type="ECO:0000269" key="11">
    <source>
    </source>
</evidence>
<evidence type="ECO:0000269" key="12">
    <source>
    </source>
</evidence>
<evidence type="ECO:0000269" key="13">
    <source>
    </source>
</evidence>
<evidence type="ECO:0000269" key="14">
    <source>
    </source>
</evidence>
<evidence type="ECO:0000269" key="15">
    <source>
    </source>
</evidence>
<evidence type="ECO:0000269" key="16">
    <source>
    </source>
</evidence>
<evidence type="ECO:0000303" key="17">
    <source>
    </source>
</evidence>
<evidence type="ECO:0000303" key="18">
    <source>
    </source>
</evidence>
<evidence type="ECO:0000303" key="19">
    <source>
    </source>
</evidence>
<evidence type="ECO:0000305" key="20"/>
<evidence type="ECO:0000305" key="21">
    <source>
    </source>
</evidence>
<evidence type="ECO:0000305" key="22">
    <source>
    </source>
</evidence>
<evidence type="ECO:0000305" key="23">
    <source>
    </source>
</evidence>
<evidence type="ECO:0000305" key="24">
    <source>
    </source>
</evidence>
<evidence type="ECO:0000305" key="25">
    <source>
    </source>
</evidence>
<evidence type="ECO:0000305" key="26">
    <source>
    </source>
</evidence>
<evidence type="ECO:0000305" key="27">
    <source>
    </source>
</evidence>
<evidence type="ECO:0000305" key="28">
    <source>
    </source>
</evidence>
<evidence type="ECO:0000305" key="29">
    <source>
    </source>
</evidence>
<evidence type="ECO:0007829" key="30">
    <source>
        <dbReference type="PDB" id="1APF"/>
    </source>
</evidence>
<proteinExistence type="evidence at protein level"/>
<feature type="chain" id="PRO_0000221516" description="Delta-actitoxin-Axm1b" evidence="6">
    <location>
        <begin position="1"/>
        <end position="49"/>
    </location>
</feature>
<feature type="region of interest" description="Well-structured region" evidence="21 22">
    <location>
        <begin position="1"/>
        <end position="7"/>
    </location>
</feature>
<feature type="region of interest" description="Arg-14 loop (non-well-structured region)" evidence="21 22">
    <location>
        <begin position="8"/>
        <end position="17"/>
    </location>
</feature>
<feature type="region of interest" description="Well-structured region" evidence="21 22">
    <location>
        <begin position="18"/>
        <end position="49"/>
    </location>
</feature>
<feature type="site" description="Structurally important" evidence="26">
    <location>
        <position position="7"/>
    </location>
</feature>
<feature type="site" description="Important for sodium channel affinity and for toxin structure" evidence="26">
    <location>
        <position position="9"/>
    </location>
</feature>
<feature type="site" description="Important for affinity to sodium channel, probably due to the flexibility this residue gives to the Arg-14 loop" evidence="21">
    <location>
        <position position="10"/>
    </location>
</feature>
<feature type="site" description="Key residue for binding both cardiac and neuronal sodium channels" evidence="23">
    <location>
        <position position="12"/>
    </location>
</feature>
<feature type="site" description="Important for sodium channel affinity" evidence="28">
    <location>
        <position position="13"/>
    </location>
</feature>
<feature type="site" description="Not essential for sodium channel affinity" evidence="24">
    <location>
        <position position="14"/>
    </location>
</feature>
<feature type="site" description="Important for affinity to sodium channel, probably due to the flexibility this residue gives to the Arg-14 loop" evidence="21">
    <location>
        <position position="15"/>
    </location>
</feature>
<feature type="site" description="Binds to sodium channel" evidence="22">
    <location>
        <position position="16"/>
    </location>
</feature>
<feature type="site" description="Has its side chain oriented away from the channel in the binary complex" evidence="22">
    <location>
        <position position="17"/>
    </location>
</feature>
<feature type="site" description="Important for high affinity to sodium channel" evidence="25">
    <location>
        <position position="18"/>
    </location>
</feature>
<feature type="site" description="Binds to sodium channel" evidence="22">
    <location>
        <position position="19"/>
    </location>
</feature>
<feature type="site" description="Structurally important" evidence="21">
    <location>
        <position position="20"/>
    </location>
</feature>
<feature type="site" description="Important for channel affinity" evidence="27">
    <location>
        <position position="33"/>
    </location>
</feature>
<feature type="site" description="Not important for channel affinity and toxin structure" evidence="26">
    <location>
        <position position="34"/>
    </location>
</feature>
<feature type="site" description="Important for channel affinity (interacts with rat Nav1.5 channel residue Asp-1612)" evidence="26 29">
    <location>
        <position position="37"/>
    </location>
</feature>
<feature type="site" description="Not important for channel affinity and toxin structure" evidence="26">
    <location>
        <position position="39"/>
    </location>
</feature>
<feature type="site" description="Structurally important" evidence="25">
    <location>
        <position position="43"/>
    </location>
</feature>
<feature type="site" description="Does not affect binding, but may affect the stabilization of the cardiac channel open conformation" evidence="27">
    <location>
        <position position="45"/>
    </location>
</feature>
<feature type="site" description="Binds to sodium channel" evidence="24">
    <location>
        <position position="48"/>
    </location>
</feature>
<feature type="site" description="Important for most of the cardiac specificity" evidence="23">
    <location>
        <position position="49"/>
    </location>
</feature>
<feature type="disulfide bond" evidence="7">
    <location>
        <begin position="4"/>
        <end position="46"/>
    </location>
</feature>
<feature type="disulfide bond" evidence="7">
    <location>
        <begin position="6"/>
        <end position="36"/>
    </location>
</feature>
<feature type="disulfide bond" evidence="7">
    <location>
        <begin position="29"/>
        <end position="47"/>
    </location>
</feature>
<feature type="mutagenesis site" description="Minor decrease in affinity for sodium channels (4.7-fold on neuronal and 2-fold on cardiac (Nav1.5) channels)." evidence="14">
    <original>P</original>
    <variation>S</variation>
    <location>
        <position position="3"/>
    </location>
</feature>
<feature type="mutagenesis site" description="Incorrect folding or very limited amount of mutant obtained." evidence="12">
    <original>D</original>
    <variation>A</variation>
    <variation>N</variation>
    <location>
        <position position="7"/>
    </location>
</feature>
<feature type="mutagenesis site" description="Incorrect folding; when associated with D-37." evidence="12">
    <original>D</original>
    <variation>K</variation>
    <location>
        <position position="7"/>
    </location>
</feature>
<feature type="mutagenesis site" description="Small decrease in affinity (4-6-fold), and very limited amount of mutant obtained." evidence="12">
    <original>D</original>
    <variation>N</variation>
    <location>
        <position position="7"/>
    </location>
</feature>
<feature type="mutagenesis site" description="Major decrease in affinity for both cardiac (Nav1.5) (300-fold) and neuronal (100-fold) channels." evidence="12">
    <original>D</original>
    <variation>A</variation>
    <location>
        <position position="9"/>
    </location>
</feature>
<feature type="mutagenesis site" description="Decrease in affinity for both cardiac (Nav1.5) (10-fold) and neuronal (8-fold) channels." evidence="12">
    <original>D</original>
    <variation>N</variation>
    <location>
        <position position="9"/>
    </location>
</feature>
<feature type="mutagenesis site" description="Decrease in affinity for both cardiac (Nav1.5) (15-fold) and neuronal (450-fold) channels, as well as a 30-fold increase in discrimination for Nav1.5. Decrease in affinity for cardiac (Nav1.5) (600-fold); when associated with A-15. Not correctly folded; when associated with A-20." evidence="2">
    <original>G</original>
    <variation>A</variation>
    <location>
        <position position="10"/>
    </location>
</feature>
<feature type="mutagenesis site" description="Major decrease in affinity for both cardiac (Nav1.5) and neuronal sodium channels." evidence="9">
    <original>R</original>
    <variation>A</variation>
    <location>
        <position position="12"/>
    </location>
</feature>
<feature type="mutagenesis site" description="Minor effect on toxicity." evidence="9">
    <original>R</original>
    <variation>K</variation>
    <location>
        <position position="12"/>
    </location>
</feature>
<feature type="mutagenesis site" description="Minor effect on toxicity. Decrease in affinity for both cardiac (Nav1.5) (5-fold) and neuronal (37-fold) channels; when associated with Q-49 (tested by ion flux studies). Loss of discrimination between cardiac and neuronal channels; when associated with Val-13 and Q-49." evidence="8 9 14">
    <original>R</original>
    <variation>S</variation>
    <location>
        <position position="12"/>
    </location>
</feature>
<feature type="mutagenesis site" description="Decrease in affinity for both cardiac (Nav1.5) (9-fold) and neuronal channels (9-fold). Loss of discrimination between cardiac and neuronal channels; when associated with S-12 and Q-49." evidence="14">
    <original>P</original>
    <variation>V</variation>
    <location>
        <position position="13"/>
    </location>
</feature>
<feature type="mutagenesis site" description="Minor effect on toxicity." evidence="10">
    <original>R</original>
    <variation>A</variation>
    <location>
        <position position="14"/>
    </location>
</feature>
<feature type="mutagenesis site" description="Minor effect on toxicity." evidence="10">
    <original>R</original>
    <variation>K</variation>
    <location>
        <position position="14"/>
    </location>
</feature>
<feature type="mutagenesis site" description="Minor effect on toxicity. Decrease in affinity for both cardiac (Nav1.5) (56-fold) and neuronal (72-fold) channels; when associated with S-12 (tested by ion flux studies). Decrease in affinity for both cardiac (Nav1.5) (13-fold) and neuronal (27-fold) channels; when associated with A-48 (tested by ion flux studies)." evidence="8 10">
    <original>R</original>
    <variation>Q</variation>
    <location>
        <position position="14"/>
    </location>
</feature>
<feature type="mutagenesis site" description="Decrease in affinity for both cardiac (Nav1.5) (13-fold) and neuronal (600-fold) channels, as well as a 50-fold increase in discrimination for Nav1.5. Decrease in affinity for cardiac (Nav1.5) (600-fold); when associated with A-10." evidence="2">
    <original>G</original>
    <variation>A</variation>
    <location>
        <position position="15"/>
    </location>
</feature>
<feature type="mutagenesis site" description="Decrease in affinity for cardiac (Nav1.5) (8-fold) channels." evidence="3">
    <original>N</original>
    <variation>A</variation>
    <location>
        <position position="16"/>
    </location>
</feature>
<feature type="mutagenesis site" description="Decrease in affinity for both cardiac (Nav1.5) (500-fold) and neuronal (3600-fold) channels." evidence="3">
    <original>N</original>
    <variation>D</variation>
    <location>
        <position position="16"/>
    </location>
</feature>
<feature type="mutagenesis site" description="Decrease in affinity for both cardiac (Nav1.5) (5-fold) and neuronal (56-fold) channels." evidence="3">
    <original>N</original>
    <variation>R</variation>
    <location>
        <position position="16"/>
    </location>
</feature>
<feature type="mutagenesis site" description="No change in activity." evidence="3">
    <original>T</original>
    <variation>A</variation>
    <variation>D</variation>
    <location>
        <position position="17"/>
    </location>
</feature>
<feature type="mutagenesis site" description="Major decrease in affinity for both cardiac (Nav1.5) (330-fold) and neuronal (34-fold) channels, as well as a 9.5-fold decrease in discrimination for Nav1.5." evidence="11">
    <original>L</original>
    <variation>A</variation>
    <location>
        <position position="18"/>
    </location>
</feature>
<feature type="mutagenesis site" description="Decrease in affinity for both cardiac (Nav1.5) and neuronal channels." evidence="11">
    <original>L</original>
    <variation>V</variation>
    <location>
        <position position="18"/>
    </location>
</feature>
<feature type="mutagenesis site" description="Decrease in affinity for cardiac (Nav1.5) (5.6-fold) channels." evidence="3">
    <original>S</original>
    <variation>A</variation>
    <location>
        <position position="19"/>
    </location>
</feature>
<feature type="mutagenesis site" description="Major decrease in affinity for both cardiac (Nav1.5) (85-fold) and neuronal (653-fold) channels." evidence="3">
    <original>S</original>
    <variation>D</variation>
    <location>
        <position position="19"/>
    </location>
</feature>
<feature type="mutagenesis site" description="Decrease in affinity for both cardiac (Nav1.5) (5.7-fold) and neuronal (27-fold) channels." evidence="3">
    <original>S</original>
    <variation>R</variation>
    <location>
        <position position="19"/>
    </location>
</feature>
<feature type="mutagenesis site" description="Incorrect folding. Incorrect folding; when associated with A-10." evidence="2">
    <original>G</original>
    <variation>A</variation>
    <location>
        <position position="20"/>
    </location>
</feature>
<feature type="mutagenesis site" description="Minor decrease in affinity for sodium channels (2.2-fold on neuronal and 2.9-fold on cardiac (Nav1.5) channels)." evidence="14">
    <original>I</original>
    <variation>T</variation>
    <location>
        <position position="21"/>
    </location>
</feature>
<feature type="mutagenesis site" description="Minor decrease in affinity for sodium channels (4.8-fold on neuronal and 2.4-fold on cardiac (Nav1.5) channels)." evidence="14">
    <original>F</original>
    <variation>L</variation>
    <location>
        <position position="24"/>
    </location>
</feature>
<feature type="mutagenesis site" description="No mutant obtained." evidence="13">
    <original>W</original>
    <variation>A</variation>
    <location>
        <position position="33"/>
    </location>
</feature>
<feature type="mutagenesis site" description="Major decrease in affinity for both cardiac (Nav1.5) (31-fold) and neuronal (50-fold) channels (tested by ion flux studies). This mutant is the first ApB mutant that displays a significantly altered association rate (K(on))." evidence="13">
    <original>W</original>
    <variation>F</variation>
    <location>
        <position position="33"/>
    </location>
</feature>
<feature type="mutagenesis site" description="No mutant obtained." evidence="13">
    <original>W</original>
    <variation>S</variation>
    <location>
        <position position="33"/>
    </location>
</feature>
<feature type="mutagenesis site" description="Minor decrease in affinity for both cardiac (Nav1.5) (5.6-fold) and neuronal (5-fold) channels." evidence="13">
    <original>W</original>
    <variation>Y</variation>
    <location>
        <position position="33"/>
    </location>
</feature>
<feature type="mutagenesis site" description="Minor decrease in affinity." evidence="12">
    <original>H</original>
    <variation>A</variation>
    <location>
        <position position="34"/>
    </location>
</feature>
<feature type="mutagenesis site" description="Decrease in affinity for both cardiac (Nav1.5) (11-fold) and neuronal (7-fold) channels." evidence="12">
    <original>K</original>
    <variation>A</variation>
    <location>
        <position position="37"/>
    </location>
</feature>
<feature type="mutagenesis site" description="Decrease in affinity for cardiac (Nav1.5) channels (13-fold) (with decrease in K(on) and increase in K(off))." evidence="16">
    <original>K</original>
    <variation>A</variation>
    <location>
        <position position="37"/>
    </location>
</feature>
<feature type="mutagenesis site" description="Incorrect folding; when associated with K-7." evidence="12">
    <original>K</original>
    <variation>D</variation>
    <location>
        <position position="37"/>
    </location>
</feature>
<feature type="mutagenesis site" description="No change in activity." evidence="12">
    <original>H</original>
    <variation>A</variation>
    <location>
        <position position="39"/>
    </location>
</feature>
<feature type="mutagenesis site" description="Small decrease in affinity for cardiac (Nav1.5) channels (1.1-fold) (with increase in both K(on) and K(off))." evidence="16">
    <original>H</original>
    <variation>A</variation>
    <location>
        <position position="39"/>
    </location>
</feature>
<feature type="mutagenesis site" description="Minor decrease in affinity for sodium channels (1.1-fold on neuronal and 3.4-fold on cardiac (Nav1.5) channels)." evidence="14">
    <original>N</original>
    <variation>T</variation>
    <location>
        <position position="42"/>
    </location>
</feature>
<feature type="mutagenesis site" description="Incorrect folding." evidence="11">
    <original>I</original>
    <variation>A</variation>
    <variation>G</variation>
    <variation>F</variation>
    <location>
        <position position="43"/>
    </location>
</feature>
<feature type="mutagenesis site" description="Small decrease in apparent binding affinity for both neuronal and cardiac (Nav1.5) channels (tested by ion flux studies)." evidence="11">
    <original>I</original>
    <variation>L</variation>
    <variation>V</variation>
    <location>
        <position position="43"/>
    </location>
</feature>
<feature type="mutagenesis site" description="Minor decrease in affinity for both cardiac (Nav1.5) (7.7-fold) and neuronal (4-fold) channels (tested by ion flux studies)." evidence="13">
    <original>W</original>
    <variation>A</variation>
    <location>
        <position position="45"/>
    </location>
</feature>
<feature type="mutagenesis site" description="Minor decrease in affinity for both cardiac (Nav1.5) (2-4-fold) (with decrease in K(on) and increase in K(off)) and neuronal (5-fold) channels (tested by ion flux studies)." evidence="13 16">
    <original>W</original>
    <variation>F</variation>
    <location>
        <position position="45"/>
    </location>
</feature>
<feature type="mutagenesis site" description="Minor decrease in affinity for both cardiac (Nav1.5) (3.3-fold) and neuronal (7-fold) channels (tested by ion flux studies)." evidence="13">
    <original>W</original>
    <variation>S</variation>
    <location>
        <position position="45"/>
    </location>
</feature>
<feature type="mutagenesis site" description="Minor effect on toxicity. Decrease in affinity for both cardiac (Nav1.5) (13-fold) and neuronal (27-fold) channels; when associated with Q-14 (tested by ion flux studies)." evidence="8 10">
    <original>K</original>
    <variation>A</variation>
    <location>
        <position position="48"/>
    </location>
</feature>
<feature type="mutagenesis site" description="Minor effect on toxicity." evidence="10">
    <original>K</original>
    <variation>Q</variation>
    <location>
        <position position="48"/>
    </location>
</feature>
<feature type="mutagenesis site" description="Minor effect on toxicity." evidence="10">
    <original>K</original>
    <variation>R</variation>
    <location>
        <position position="48"/>
    </location>
</feature>
<feature type="mutagenesis site" description="Minor effect on toxicity." evidence="9">
    <original>K</original>
    <variation>A</variation>
    <location>
        <position position="49"/>
    </location>
</feature>
<feature type="mutagenesis site" description="Minor effect on toxicity. Decrease in affinity for both cardiac (Nav1.5) (5-fold) and neuronal (37-fold) channels; when associated with S-12 (tested by ion flux studies). Loss of discrimination between cardiac and neuronal channels; when associated with S-12 and V-13." evidence="8 9 14">
    <original>K</original>
    <variation>Q</variation>
    <location>
        <position position="49"/>
    </location>
</feature>
<feature type="mutagenesis site" description="Minor effect on toxicity." evidence="9">
    <original>K</original>
    <variation>R</variation>
    <location>
        <position position="49"/>
    </location>
</feature>
<feature type="sequence conflict" description="In Ref. 3; AA sequence." evidence="20" ref="3">
    <original>RP</original>
    <variation>PN</variation>
    <location>
        <begin position="12"/>
        <end position="13"/>
    </location>
</feature>
<feature type="sequence conflict" description="In Ref. 3; AA sequence." evidence="20" ref="3">
    <original>Y</original>
    <variation>A</variation>
    <location>
        <position position="25"/>
    </location>
</feature>
<feature type="turn" evidence="30">
    <location>
        <begin position="14"/>
        <end position="17"/>
    </location>
</feature>
<feature type="strand" evidence="30">
    <location>
        <begin position="20"/>
        <end position="23"/>
    </location>
</feature>
<feature type="strand" evidence="30">
    <location>
        <begin position="42"/>
        <end position="47"/>
    </location>
</feature>
<protein>
    <recommendedName>
        <fullName evidence="17">Delta-actitoxin-Axm1b</fullName>
        <shortName evidence="17">Delta-AITX-Axm1b</shortName>
    </recommendedName>
    <alternativeName>
        <fullName evidence="18">Anthopleurin-B</fullName>
        <shortName evidence="18">AP-B</shortName>
        <shortName evidence="19">ApB</shortName>
    </alternativeName>
</protein>
<keyword id="KW-0002">3D-structure</keyword>
<keyword id="KW-0123">Cardiotoxin</keyword>
<keyword id="KW-0903">Direct protein sequencing</keyword>
<keyword id="KW-1015">Disulfide bond</keyword>
<keyword id="KW-0872">Ion channel impairing toxin</keyword>
<keyword id="KW-0166">Nematocyst</keyword>
<keyword id="KW-0528">Neurotoxin</keyword>
<keyword id="KW-0964">Secreted</keyword>
<keyword id="KW-0800">Toxin</keyword>
<keyword id="KW-0738">Voltage-gated sodium channel impairing toxin</keyword>
<accession>P01531</accession>
<accession>V9GZA1</accession>
<dbReference type="EMBL" id="M90675">
    <property type="protein sequence ID" value="AAA27737.1"/>
    <property type="status" value="ALT_INIT"/>
    <property type="molecule type" value="mRNA"/>
</dbReference>
<dbReference type="PIR" id="A92547">
    <property type="entry name" value="NAXAB"/>
</dbReference>
<dbReference type="PDB" id="1APF">
    <property type="method" value="NMR"/>
    <property type="chains" value="A=1-49"/>
</dbReference>
<dbReference type="PDBsum" id="1APF"/>
<dbReference type="SMR" id="P01531"/>
<dbReference type="EvolutionaryTrace" id="P01531"/>
<dbReference type="GO" id="GO:0005576">
    <property type="term" value="C:extracellular region"/>
    <property type="evidence" value="ECO:0007669"/>
    <property type="project" value="UniProtKB-SubCell"/>
</dbReference>
<dbReference type="GO" id="GO:0042151">
    <property type="term" value="C:nematocyst"/>
    <property type="evidence" value="ECO:0007669"/>
    <property type="project" value="UniProtKB-SubCell"/>
</dbReference>
<dbReference type="GO" id="GO:0017080">
    <property type="term" value="F:sodium channel regulator activity"/>
    <property type="evidence" value="ECO:0007669"/>
    <property type="project" value="UniProtKB-KW"/>
</dbReference>
<dbReference type="GO" id="GO:0090729">
    <property type="term" value="F:toxin activity"/>
    <property type="evidence" value="ECO:0007669"/>
    <property type="project" value="UniProtKB-KW"/>
</dbReference>
<dbReference type="GO" id="GO:0009966">
    <property type="term" value="P:regulation of signal transduction"/>
    <property type="evidence" value="ECO:0007669"/>
    <property type="project" value="InterPro"/>
</dbReference>
<dbReference type="Gene3D" id="2.20.20.10">
    <property type="entry name" value="Anthopleurin-A"/>
    <property type="match status" value="1"/>
</dbReference>
<dbReference type="InterPro" id="IPR000693">
    <property type="entry name" value="Anenome_toxin"/>
</dbReference>
<dbReference type="InterPro" id="IPR023355">
    <property type="entry name" value="Myo_ane_neurotoxin_sf"/>
</dbReference>
<dbReference type="Pfam" id="PF00706">
    <property type="entry name" value="Toxin_4"/>
    <property type="match status" value="1"/>
</dbReference>
<dbReference type="PIRSF" id="PIRSF001905">
    <property type="entry name" value="Anenome_toxin"/>
    <property type="match status" value="1"/>
</dbReference>
<dbReference type="SUPFAM" id="SSF57392">
    <property type="entry name" value="Defensin-like"/>
    <property type="match status" value="1"/>
</dbReference>
<sequence>GVPCLCDSDGPRPRGNTLSGILWFYPSGCPSGWHNCKAHGPNIGWCCKK</sequence>
<reference key="1">
    <citation type="journal article" date="1985" name="J. Biol. Chem.">
        <title>Amino acid sequence of the Anthopleura xanthogrammica heart stimulant, anthopleurin-B.</title>
        <authorList>
            <person name="Reimer N.S."/>
            <person name="Yasunobu C.L."/>
            <person name="Yasunobu K.T."/>
            <person name="Norton T.R."/>
        </authorList>
    </citation>
    <scope>PROTEIN SEQUENCE</scope>
    <source>
        <tissue>Nematoblast</tissue>
    </source>
</reference>
<reference key="2">
    <citation type="journal article" date="1992" name="J. Biol. Chem.">
        <title>Cloning and expression of wild-type and mutant forms of the cardiotonic polypeptide anthopleurin B.</title>
        <authorList>
            <person name="Gallagher M.J."/>
            <person name="Blumenthal K.M."/>
        </authorList>
    </citation>
    <scope>NUCLEOTIDE SEQUENCE [MRNA]</scope>
</reference>
<reference key="3">
    <citation type="journal article" date="1981" name="Fed. Proc.">
        <title>Cardiotonic polypeptides from Anthopleura xanthogrammica (Brandt) and A. elegantissima (Brandt).</title>
        <authorList>
            <person name="Norton T.R."/>
        </authorList>
    </citation>
    <scope>PROTEIN SEQUENCE OF 1-28</scope>
</reference>
<reference key="4">
    <citation type="journal article" date="1994" name="J. Biol. Chem.">
        <title>Importance of the unique cationic residues arginine 12 and lysine 49 in the activity of the cardiotonic polypeptide anthopleurin B.</title>
        <authorList>
            <person name="Gallagher M.J."/>
            <person name="Blumenthal K.M."/>
        </authorList>
    </citation>
    <scope>FUNCTION</scope>
    <scope>MUTAGENESIS OF ARG-12 AND LYS-49</scope>
    <scope>SITES ARG-12 AND LYS-49</scope>
</reference>
<reference key="5">
    <citation type="journal article" date="1994" name="J. Biol. Chem.">
        <title>Role of the cationic residues arginine 14 and lysine 48 in the function of the cardiotonic polypeptide anthopleurin B.</title>
        <authorList>
            <person name="Khera P.K."/>
            <person name="Blumenthal K.M."/>
        </authorList>
    </citation>
    <scope>MUTAGENESIS OF ARG-14 AND LYS-48</scope>
    <scope>SITES ARG-14 AND LYS-48</scope>
</reference>
<reference key="6">
    <citation type="journal article" date="1995" name="Biochemistry">
        <title>Multiple cationic residues of anthopleurin B that determine high affinity and channel isoform discrimination.</title>
        <authorList>
            <person name="Khera P.K."/>
            <person name="Benzinger G.R."/>
            <person name="Lipkind G."/>
            <person name="Drum C.L."/>
            <person name="Hanck D.A."/>
            <person name="Blumenthal K.M."/>
        </authorList>
    </citation>
    <scope>FUNCTION</scope>
    <scope>MUTAGENESIS OF ARG-12; ARG-14; LYS-48 AND LYS-49</scope>
</reference>
<reference key="7">
    <citation type="journal article" date="1996" name="Biochemistry">
        <title>Importance of highly conserved anionic residues and electrostatic interactions in the activity and structure of the cardiotonic polypeptide anthopleurin B.</title>
        <authorList>
            <person name="Khera P.K."/>
            <person name="Blumenthal K.M."/>
        </authorList>
    </citation>
    <scope>MUTAGENESIS OF ASP-7; ASP-9; HIS-34; LYS-37 AND HIS-39</scope>
    <scope>SITES ASP-7; ASP-9; LYS-34; LYS-37 AND LYS-39</scope>
</reference>
<reference key="8">
    <citation type="journal article" date="1996" name="Biochemistry">
        <title>Role for Pro-13 in directing high-affinity binding of anthopleurin B to the voltage-sensitive sodium channel.</title>
        <authorList>
            <person name="Kelso G.J."/>
            <person name="Drum C.L."/>
            <person name="Hanck D.A."/>
            <person name="Blumenthal K.M."/>
        </authorList>
    </citation>
    <scope>MUTAGENESIS OF PRO-3; ARG-12; PRO-13; ILE-21; PHE-24; ASN-42 AND LYS-49</scope>
    <scope>SITE PRO-13</scope>
</reference>
<reference key="9">
    <citation type="journal article" date="1996" name="J. Biol. Chem.">
        <title>Leucine 18, a hydrophobic residue essential for high affinity binding of anthopleurin B to the voltage-sensitive sodium channel.</title>
        <authorList>
            <person name="Dias-Kadambi B.L."/>
            <person name="Drum C.L."/>
            <person name="Hanck D.A."/>
            <person name="Blumenthal K.M."/>
        </authorList>
    </citation>
    <scope>MUTAGENESIS OF LEU-18 AND ILE-43</scope>
    <scope>SITES LEU-18 AND ILE-43</scope>
</reference>
<reference key="10">
    <citation type="journal article" date="1996" name="J. Biol. Chem.">
        <title>The role of exposed tryptophan residues in the activity of the cardiotonic polypeptide anthopleurin B.</title>
        <authorList>
            <person name="Dias-Kadambi B.L."/>
            <person name="Combs K.A."/>
            <person name="Drum C.L."/>
            <person name="Hanck D.A."/>
            <person name="Blumenthal K.M."/>
        </authorList>
    </citation>
    <scope>MUTAGENESIS OF TRP-33 AND TRP-45</scope>
    <scope>SITES TRP-33 AND TRP-45</scope>
</reference>
<reference key="11">
    <citation type="journal article" date="1997" name="Pflugers Arch.">
        <title>Differences in the binding sites of two site-3 sodium channel toxins.</title>
        <authorList>
            <person name="Benzinger G.R."/>
            <person name="Drum C.L."/>
            <person name="Chen L.Q."/>
            <person name="Kallen R.G."/>
            <person name="Hanck D.A."/>
            <person name="Hanck D."/>
        </authorList>
    </citation>
    <scope>FUNCTION ON CHANNEL DOMAIN 1-DOMAIN 4 INTERFACE</scope>
</reference>
<reference key="12">
    <citation type="journal article" date="1998" name="J. Biol. Chem.">
        <title>A specific interaction between the cardiac sodium channel and site-3 toxin anthopleurin B.</title>
        <authorList>
            <person name="Benzinger G.R."/>
            <person name="Kyle J.W."/>
            <person name="Blumenthal K.M."/>
            <person name="Hanck D.A."/>
        </authorList>
    </citation>
    <scope>MUTAGENESIS OF LYS-37; HIS-39 AND TRP-45</scope>
    <scope>SITES LYS-37; HIS-39 AND TRP-45</scope>
</reference>
<reference key="13">
    <citation type="journal article" date="2003" name="Biochemistry">
        <title>Arg-14 loop of site 3 anemone toxins: effects of glycine replacement on toxin affinity.</title>
        <authorList>
            <person name="Seibert A.L."/>
            <person name="Liu J."/>
            <person name="Hanck D.A."/>
            <person name="Blumenthal K.M."/>
        </authorList>
    </citation>
    <scope>MUTAGENESIS OF GLY-10; GLY-15 AND GLY-20</scope>
    <scope>SITES GLY-10; GLY-15 AND GLY-20</scope>
</reference>
<reference key="14">
    <citation type="journal article" date="2004" name="Biochemistry">
        <title>Role of Asn-16 and Ser-19 in anthopleurin B binding. Implications for the electrostatic nature of Na(V) site 3.</title>
        <authorList>
            <person name="Seibert A.L."/>
            <person name="Liu J."/>
            <person name="Hanck D.A."/>
            <person name="Blumenthal K.M."/>
        </authorList>
    </citation>
    <scope>MUTAGENESIS OF ASN-16; THR-17 AND SER-19</scope>
    <scope>SITES ASN-16; THR-17 AND SER-19</scope>
</reference>
<reference key="15">
    <citation type="journal article" date="2005" name="J. Biol. Chem.">
        <title>Differential phospholipid binding by site 3 and site 4 toxins. Implications for structural variability between voltage-sensitive sodium channel domains.</title>
        <authorList>
            <person name="Smith J.J."/>
            <person name="Alphy S."/>
            <person name="Seibert A.L."/>
            <person name="Blumenthal K.M."/>
        </authorList>
    </citation>
    <scope>PHOSPHOLIPID-BINDING ACTIVITY</scope>
</reference>
<reference key="16">
    <citation type="journal article" date="2014" name="Mol. Pharmacol.">
        <title>Gating-pore currents demonstrate selective and specific modulation of individual sodium channel voltage-sensors by biological toxins.</title>
        <authorList>
            <person name="Xiao Y."/>
            <person name="Blumenthal K."/>
            <person name="Cummins T.R."/>
        </authorList>
    </citation>
    <scope>FUNCTION</scope>
</reference>
<reference key="17">
    <citation type="journal article" date="2007" name="Toxicon">
        <title>Site-3 toxins and cardiac sodium channels.</title>
        <authorList>
            <person name="Hanck D.A."/>
            <person name="Sheets M.F."/>
        </authorList>
    </citation>
    <scope>REVIEW</scope>
</reference>
<reference key="18">
    <citation type="journal article" date="2012" name="Toxicon">
        <title>Development of a rational nomenclature for naming peptide and protein toxins from sea anemones.</title>
        <authorList>
            <person name="Oliveira J.S."/>
            <person name="Fuentes-Silva D."/>
            <person name="King G.F."/>
        </authorList>
    </citation>
    <scope>NOMENCLATURE</scope>
</reference>
<reference key="19">
    <citation type="journal article" date="1995" name="Structure">
        <title>Solution structure of the cardiostimulant polypeptide anthopleurin-B and comparison with anthopleurin-A.</title>
        <authorList>
            <person name="Monks S.A."/>
            <person name="Pallaghy P.K."/>
            <person name="Scanlon M.J."/>
            <person name="Norton R.S."/>
        </authorList>
    </citation>
    <scope>STRUCTURE BY NMR</scope>
    <scope>DISULFIDE BONDS</scope>
</reference>
<organism>
    <name type="scientific">Anthopleura xanthogrammica</name>
    <name type="common">Giant green sea anemone</name>
    <name type="synonym">Actinia xanthogrammica</name>
    <dbReference type="NCBI Taxonomy" id="6112"/>
    <lineage>
        <taxon>Eukaryota</taxon>
        <taxon>Metazoa</taxon>
        <taxon>Cnidaria</taxon>
        <taxon>Anthozoa</taxon>
        <taxon>Hexacorallia</taxon>
        <taxon>Actiniaria</taxon>
        <taxon>Actiniidae</taxon>
        <taxon>Anthopleura</taxon>
    </lineage>
</organism>
<name>NA1B_ANTXA</name>
<comment type="function">
    <text evidence="1 4 5 8 9 14 15 16">Binds specifically to voltage-gated sodium channels (Nav) (site 3), thereby delaying their inactivation. This toxin has the highest affinity of all anemone toxins for the mammalian sodium channel, whereas its paralog Anthopleurin-A retains the greatest capacity to discriminate between cardiac (Nav1.5/SCN5A) and neuronal sodium channels (PubMed:8916901). When tested electrophysiologically, this toxin exhibits a high affinity for multiple sodium channels with a 50-fold preference for rat cardiac (Nav1.5/SCN5A) over neuronal channels (0.1 nM versus 5 nM). When tested by ion flux, the affinities are similar and appear to have higher affinity (9 nM versus 22 nM) (PubMed:7612595, PubMed:8276803). The residue Lys-37 of this toxin has been shown to interact with channel Nav1.5 (residue Asp-1612 in rat and Asp-1610 in human), which is located in the DIV S3-S4 linker (corresponding to channel site 3) (PubMed:24898004, PubMed:9417050). Selectively modifies sodium channel inactivation from the open state with little effect on channel activation or on inactivation from closed states (By similarity). Does not display phospholipid-binding activities, suggesting that the domain IV S3-S4 linker is located at the extracellular surface and not buried in the phospholipid bilayer (PubMed:15632158).</text>
</comment>
<comment type="subcellular location">
    <subcellularLocation>
        <location evidence="20">Secreted</location>
    </subcellularLocation>
    <subcellularLocation>
        <location evidence="20">Nematocyst</location>
    </subcellularLocation>
</comment>
<comment type="similarity">
    <text evidence="20">Belongs to the sea anemone sodium channel inhibitory toxin family. Type I subfamily.</text>
</comment>
<comment type="sequence caution" evidence="20">
    <conflict type="erroneous initiation">
        <sequence resource="EMBL-CDS" id="AAA27737"/>
    </conflict>
    <text>Extended N-terminus.</text>
</comment>
<comment type="online information" name="Wikipedia">
    <link uri="https://en.wikipedia.org/wiki/Anthopleurin"/>
</comment>